<evidence type="ECO:0000255" key="1">
    <source>
        <dbReference type="HAMAP-Rule" id="MF_01395"/>
    </source>
</evidence>
<evidence type="ECO:0000255" key="2">
    <source>
        <dbReference type="PROSITE-ProRule" id="PRU01136"/>
    </source>
</evidence>
<sequence length="280" mass="31133">MLQSRFKMPSHDELVKRMDAIPDHVMRECPICHAKFLSMRLGRDHTCPKCGYGFRILAKRRVKITFDKFTEIDQNITVPDRYTDEKYRAKIAKAKKVTGLNESVLTGIGSLNKQQVAVGIMDPFWIMGSLGSATGEKITRLFELATRKDLPVVMFTSSGGARMQEGIHSLMQMAKVSSAVAEHSAAGLLYIVVLCDPTTGGVTASFAMDGDIILAEPHALVGFAGRRVIEQTIMQTPPKDFQSAETVMKHGFIDQIVKRSDMKKTLTQLLRLHTKENAYG</sequence>
<comment type="function">
    <text evidence="1">Component of the acetyl coenzyme A carboxylase (ACC) complex. Biotin carboxylase (BC) catalyzes the carboxylation of biotin on its carrier protein (BCCP) and then the CO(2) group is transferred by the transcarboxylase to acetyl-CoA to form malonyl-CoA.</text>
</comment>
<comment type="catalytic activity">
    <reaction evidence="1">
        <text>N(6)-carboxybiotinyl-L-lysyl-[protein] + acetyl-CoA = N(6)-biotinyl-L-lysyl-[protein] + malonyl-CoA</text>
        <dbReference type="Rhea" id="RHEA:54728"/>
        <dbReference type="Rhea" id="RHEA-COMP:10505"/>
        <dbReference type="Rhea" id="RHEA-COMP:10506"/>
        <dbReference type="ChEBI" id="CHEBI:57288"/>
        <dbReference type="ChEBI" id="CHEBI:57384"/>
        <dbReference type="ChEBI" id="CHEBI:83144"/>
        <dbReference type="ChEBI" id="CHEBI:83145"/>
        <dbReference type="EC" id="2.1.3.15"/>
    </reaction>
</comment>
<comment type="cofactor">
    <cofactor evidence="1">
        <name>Zn(2+)</name>
        <dbReference type="ChEBI" id="CHEBI:29105"/>
    </cofactor>
    <text evidence="1">Binds 1 zinc ion per subunit.</text>
</comment>
<comment type="pathway">
    <text evidence="1">Lipid metabolism; malonyl-CoA biosynthesis; malonyl-CoA from acetyl-CoA: step 1/1.</text>
</comment>
<comment type="subunit">
    <text evidence="1">Acetyl-CoA carboxylase is a heterohexamer composed of biotin carboxyl carrier protein (AccB), biotin carboxylase (AccC) and two subunits each of ACCase subunit alpha (AccA) and ACCase subunit beta (AccD).</text>
</comment>
<comment type="subcellular location">
    <subcellularLocation>
        <location evidence="1">Cytoplasm</location>
    </subcellularLocation>
</comment>
<comment type="similarity">
    <text evidence="1">Belongs to the AccD/PCCB family.</text>
</comment>
<dbReference type="EC" id="2.1.3.15" evidence="1"/>
<dbReference type="EMBL" id="CP000517">
    <property type="protein sequence ID" value="ABX27762.1"/>
    <property type="molecule type" value="Genomic_DNA"/>
</dbReference>
<dbReference type="RefSeq" id="WP_003630373.1">
    <property type="nucleotide sequence ID" value="NC_010080.1"/>
</dbReference>
<dbReference type="SMR" id="A8YXR2"/>
<dbReference type="KEGG" id="lhe:lhv_1924"/>
<dbReference type="eggNOG" id="COG0777">
    <property type="taxonomic scope" value="Bacteria"/>
</dbReference>
<dbReference type="HOGENOM" id="CLU_015486_1_1_9"/>
<dbReference type="UniPathway" id="UPA00655">
    <property type="reaction ID" value="UER00711"/>
</dbReference>
<dbReference type="Proteomes" id="UP000000790">
    <property type="component" value="Chromosome"/>
</dbReference>
<dbReference type="GO" id="GO:0009317">
    <property type="term" value="C:acetyl-CoA carboxylase complex"/>
    <property type="evidence" value="ECO:0007669"/>
    <property type="project" value="InterPro"/>
</dbReference>
<dbReference type="GO" id="GO:0003989">
    <property type="term" value="F:acetyl-CoA carboxylase activity"/>
    <property type="evidence" value="ECO:0007669"/>
    <property type="project" value="InterPro"/>
</dbReference>
<dbReference type="GO" id="GO:0005524">
    <property type="term" value="F:ATP binding"/>
    <property type="evidence" value="ECO:0007669"/>
    <property type="project" value="UniProtKB-KW"/>
</dbReference>
<dbReference type="GO" id="GO:0016743">
    <property type="term" value="F:carboxyl- or carbamoyltransferase activity"/>
    <property type="evidence" value="ECO:0007669"/>
    <property type="project" value="UniProtKB-UniRule"/>
</dbReference>
<dbReference type="GO" id="GO:0008270">
    <property type="term" value="F:zinc ion binding"/>
    <property type="evidence" value="ECO:0007669"/>
    <property type="project" value="UniProtKB-UniRule"/>
</dbReference>
<dbReference type="GO" id="GO:0006633">
    <property type="term" value="P:fatty acid biosynthetic process"/>
    <property type="evidence" value="ECO:0007669"/>
    <property type="project" value="UniProtKB-KW"/>
</dbReference>
<dbReference type="GO" id="GO:2001295">
    <property type="term" value="P:malonyl-CoA biosynthetic process"/>
    <property type="evidence" value="ECO:0007669"/>
    <property type="project" value="UniProtKB-UniRule"/>
</dbReference>
<dbReference type="Gene3D" id="3.90.226.10">
    <property type="entry name" value="2-enoyl-CoA Hydratase, Chain A, domain 1"/>
    <property type="match status" value="1"/>
</dbReference>
<dbReference type="HAMAP" id="MF_01395">
    <property type="entry name" value="AcetylCoA_CT_beta"/>
    <property type="match status" value="1"/>
</dbReference>
<dbReference type="InterPro" id="IPR034733">
    <property type="entry name" value="AcCoA_carboxyl_beta"/>
</dbReference>
<dbReference type="InterPro" id="IPR000438">
    <property type="entry name" value="Acetyl_CoA_COase_Trfase_b_su"/>
</dbReference>
<dbReference type="InterPro" id="IPR029045">
    <property type="entry name" value="ClpP/crotonase-like_dom_sf"/>
</dbReference>
<dbReference type="InterPro" id="IPR011762">
    <property type="entry name" value="COA_CT_N"/>
</dbReference>
<dbReference type="PANTHER" id="PTHR42995">
    <property type="entry name" value="ACETYL-COENZYME A CARBOXYLASE CARBOXYL TRANSFERASE SUBUNIT BETA, CHLOROPLASTIC"/>
    <property type="match status" value="1"/>
</dbReference>
<dbReference type="PANTHER" id="PTHR42995:SF5">
    <property type="entry name" value="ACETYL-COENZYME A CARBOXYLASE CARBOXYL TRANSFERASE SUBUNIT BETA, CHLOROPLASTIC"/>
    <property type="match status" value="1"/>
</dbReference>
<dbReference type="Pfam" id="PF01039">
    <property type="entry name" value="Carboxyl_trans"/>
    <property type="match status" value="1"/>
</dbReference>
<dbReference type="PRINTS" id="PR01070">
    <property type="entry name" value="ACCCTRFRASEB"/>
</dbReference>
<dbReference type="SUPFAM" id="SSF52096">
    <property type="entry name" value="ClpP/crotonase"/>
    <property type="match status" value="1"/>
</dbReference>
<dbReference type="PROSITE" id="PS50980">
    <property type="entry name" value="COA_CT_NTER"/>
    <property type="match status" value="1"/>
</dbReference>
<protein>
    <recommendedName>
        <fullName evidence="1">Acetyl-coenzyme A carboxylase carboxyl transferase subunit beta</fullName>
        <shortName evidence="1">ACCase subunit beta</shortName>
        <shortName evidence="1">Acetyl-CoA carboxylase carboxyltransferase subunit beta</shortName>
        <ecNumber evidence="1">2.1.3.15</ecNumber>
    </recommendedName>
</protein>
<feature type="chain" id="PRO_0000389766" description="Acetyl-coenzyme A carboxylase carboxyl transferase subunit beta">
    <location>
        <begin position="1"/>
        <end position="280"/>
    </location>
</feature>
<feature type="domain" description="CoA carboxyltransferase N-terminal" evidence="2">
    <location>
        <begin position="25"/>
        <end position="280"/>
    </location>
</feature>
<feature type="zinc finger region" description="C4-type" evidence="1">
    <location>
        <begin position="29"/>
        <end position="50"/>
    </location>
</feature>
<feature type="binding site" evidence="1">
    <location>
        <position position="29"/>
    </location>
    <ligand>
        <name>Zn(2+)</name>
        <dbReference type="ChEBI" id="CHEBI:29105"/>
    </ligand>
</feature>
<feature type="binding site" evidence="1">
    <location>
        <position position="32"/>
    </location>
    <ligand>
        <name>Zn(2+)</name>
        <dbReference type="ChEBI" id="CHEBI:29105"/>
    </ligand>
</feature>
<feature type="binding site" evidence="1">
    <location>
        <position position="47"/>
    </location>
    <ligand>
        <name>Zn(2+)</name>
        <dbReference type="ChEBI" id="CHEBI:29105"/>
    </ligand>
</feature>
<feature type="binding site" evidence="1">
    <location>
        <position position="50"/>
    </location>
    <ligand>
        <name>Zn(2+)</name>
        <dbReference type="ChEBI" id="CHEBI:29105"/>
    </ligand>
</feature>
<gene>
    <name evidence="1" type="primary">accD</name>
    <name type="ordered locus">lhv_1924</name>
</gene>
<reference key="1">
    <citation type="journal article" date="2008" name="J. Bacteriol.">
        <title>Genome sequence of Lactobacillus helveticus: an organism distinguished by selective gene loss and IS element expansion.</title>
        <authorList>
            <person name="Callanan M."/>
            <person name="Kaleta P."/>
            <person name="O'Callaghan J."/>
            <person name="O'Sullivan O."/>
            <person name="Jordan K."/>
            <person name="McAuliffe O."/>
            <person name="Sangrador-Vegas A."/>
            <person name="Slattery L."/>
            <person name="Fitzgerald G.F."/>
            <person name="Beresford T."/>
            <person name="Ross R.P."/>
        </authorList>
    </citation>
    <scope>NUCLEOTIDE SEQUENCE [LARGE SCALE GENOMIC DNA]</scope>
    <source>
        <strain>DPC 4571</strain>
    </source>
</reference>
<organism>
    <name type="scientific">Lactobacillus helveticus (strain DPC 4571)</name>
    <dbReference type="NCBI Taxonomy" id="405566"/>
    <lineage>
        <taxon>Bacteria</taxon>
        <taxon>Bacillati</taxon>
        <taxon>Bacillota</taxon>
        <taxon>Bacilli</taxon>
        <taxon>Lactobacillales</taxon>
        <taxon>Lactobacillaceae</taxon>
        <taxon>Lactobacillus</taxon>
    </lineage>
</organism>
<keyword id="KW-0067">ATP-binding</keyword>
<keyword id="KW-0963">Cytoplasm</keyword>
<keyword id="KW-0275">Fatty acid biosynthesis</keyword>
<keyword id="KW-0276">Fatty acid metabolism</keyword>
<keyword id="KW-0444">Lipid biosynthesis</keyword>
<keyword id="KW-0443">Lipid metabolism</keyword>
<keyword id="KW-0479">Metal-binding</keyword>
<keyword id="KW-0547">Nucleotide-binding</keyword>
<keyword id="KW-0808">Transferase</keyword>
<keyword id="KW-0862">Zinc</keyword>
<keyword id="KW-0863">Zinc-finger</keyword>
<name>ACCD_LACH4</name>
<accession>A8YXR2</accession>
<proteinExistence type="inferred from homology"/>